<dbReference type="EMBL" id="AE014298">
    <property type="protein sequence ID" value="AAF48169.1"/>
    <property type="molecule type" value="Genomic_DNA"/>
</dbReference>
<dbReference type="EMBL" id="AY075242">
    <property type="protein sequence ID" value="AAL68109.1"/>
    <property type="molecule type" value="mRNA"/>
</dbReference>
<dbReference type="EMBL" id="BT150306">
    <property type="protein sequence ID" value="AGW24088.1"/>
    <property type="molecule type" value="mRNA"/>
</dbReference>
<dbReference type="RefSeq" id="NP_572804.1">
    <property type="nucleotide sequence ID" value="NM_132576.2"/>
</dbReference>
<dbReference type="SMR" id="Q9VYM3"/>
<dbReference type="ComplexPortal" id="CPX-2339">
    <property type="entry name" value="MKS complex"/>
</dbReference>
<dbReference type="FunCoup" id="Q9VYM3">
    <property type="interactions" value="264"/>
</dbReference>
<dbReference type="STRING" id="7227.FBpp0073500"/>
<dbReference type="PaxDb" id="7227-FBpp0073500"/>
<dbReference type="EnsemblMetazoa" id="FBtr0073667">
    <property type="protein sequence ID" value="FBpp0073500"/>
    <property type="gene ID" value="FBgn0030395"/>
</dbReference>
<dbReference type="GeneID" id="32200"/>
<dbReference type="KEGG" id="dme:Dmel_CG15730"/>
<dbReference type="UCSC" id="CG15730-RA">
    <property type="organism name" value="d. melanogaster"/>
</dbReference>
<dbReference type="AGR" id="FB:FBgn0030395"/>
<dbReference type="CTD" id="54903"/>
<dbReference type="FlyBase" id="FBgn0030395">
    <property type="gene designation" value="Mks1"/>
</dbReference>
<dbReference type="VEuPathDB" id="VectorBase:FBgn0030395"/>
<dbReference type="eggNOG" id="KOG4446">
    <property type="taxonomic scope" value="Eukaryota"/>
</dbReference>
<dbReference type="GeneTree" id="ENSGT00510000047471"/>
<dbReference type="HOGENOM" id="CLU_393936_0_0_1"/>
<dbReference type="InParanoid" id="Q9VYM3"/>
<dbReference type="OMA" id="CEGYAHY"/>
<dbReference type="OrthoDB" id="10263520at2759"/>
<dbReference type="PhylomeDB" id="Q9VYM3"/>
<dbReference type="Reactome" id="R-DME-5610787">
    <property type="pathway name" value="Hedgehog 'off' state"/>
</dbReference>
<dbReference type="BioGRID-ORCS" id="32200">
    <property type="hits" value="0 hits in 1 CRISPR screen"/>
</dbReference>
<dbReference type="GenomeRNAi" id="32200"/>
<dbReference type="PRO" id="PR:Q9VYM3"/>
<dbReference type="Proteomes" id="UP000000803">
    <property type="component" value="Chromosome X"/>
</dbReference>
<dbReference type="Bgee" id="FBgn0030395">
    <property type="expression patterns" value="Expressed in testis and 1 other cell type or tissue"/>
</dbReference>
<dbReference type="GO" id="GO:0005814">
    <property type="term" value="C:centriole"/>
    <property type="evidence" value="ECO:0007669"/>
    <property type="project" value="UniProtKB-SubCell"/>
</dbReference>
<dbReference type="GO" id="GO:0061822">
    <property type="term" value="C:ciliary cap"/>
    <property type="evidence" value="ECO:0000314"/>
    <property type="project" value="FlyBase"/>
</dbReference>
<dbReference type="GO" id="GO:0035869">
    <property type="term" value="C:ciliary transition zone"/>
    <property type="evidence" value="ECO:0000314"/>
    <property type="project" value="UniProtKB"/>
</dbReference>
<dbReference type="GO" id="GO:0005737">
    <property type="term" value="C:cytoplasm"/>
    <property type="evidence" value="ECO:0007669"/>
    <property type="project" value="UniProtKB-KW"/>
</dbReference>
<dbReference type="GO" id="GO:0036038">
    <property type="term" value="C:MKS complex"/>
    <property type="evidence" value="ECO:0000250"/>
    <property type="project" value="FlyBase"/>
</dbReference>
<dbReference type="GO" id="GO:0035082">
    <property type="term" value="P:axoneme assembly"/>
    <property type="evidence" value="ECO:0000315"/>
    <property type="project" value="FlyBase"/>
</dbReference>
<dbReference type="GO" id="GO:1905349">
    <property type="term" value="P:ciliary transition zone assembly"/>
    <property type="evidence" value="ECO:0000315"/>
    <property type="project" value="FlyBase"/>
</dbReference>
<dbReference type="GO" id="GO:0060271">
    <property type="term" value="P:cilium assembly"/>
    <property type="evidence" value="ECO:0000318"/>
    <property type="project" value="GO_Central"/>
</dbReference>
<dbReference type="GO" id="GO:1905515">
    <property type="term" value="P:non-motile cilium assembly"/>
    <property type="evidence" value="ECO:0000315"/>
    <property type="project" value="FlyBase"/>
</dbReference>
<dbReference type="InterPro" id="IPR010796">
    <property type="entry name" value="C2_B9-type_dom"/>
</dbReference>
<dbReference type="PANTHER" id="PTHR12968">
    <property type="entry name" value="B9 DOMAIN-CONTAINING"/>
    <property type="match status" value="1"/>
</dbReference>
<dbReference type="PANTHER" id="PTHR12968:SF4">
    <property type="entry name" value="TECTONIC-LIKE COMPLEX MEMBER MKS1"/>
    <property type="match status" value="1"/>
</dbReference>
<dbReference type="Pfam" id="PF07162">
    <property type="entry name" value="B9-C2"/>
    <property type="match status" value="1"/>
</dbReference>
<dbReference type="PROSITE" id="PS51381">
    <property type="entry name" value="C2_B9"/>
    <property type="match status" value="1"/>
</dbReference>
<protein>
    <recommendedName>
        <fullName evidence="8">Tectonic-like complex member Mks1</fullName>
    </recommendedName>
    <alternativeName>
        <fullName evidence="8">Meckel syndrome type 1 protein homolog</fullName>
    </alternativeName>
</protein>
<comment type="function">
    <text evidence="4 5">Probable component of the tectonic-like complex (also named MKS complex), a complex localized at the transition zone of primary cilia (PubMed:27577095, PubMed:27646273). Required for ciliary structure and function (PubMed:27577095).</text>
</comment>
<comment type="subunit">
    <text evidence="9 10">Probable component of the tectonic-like complex (also named MKS complex), composed of B9d1, B9d2, Cc2d2a, Mks1 and tctn.</text>
</comment>
<comment type="subcellular location">
    <subcellularLocation>
        <location evidence="3 4 5 6">Cytoplasm</location>
        <location evidence="3 4 5 6">Cytoskeleton</location>
        <location evidence="3 4 5 6">Cilium basal body</location>
    </subcellularLocation>
    <subcellularLocation>
        <location evidence="5">Cytoplasm</location>
        <location evidence="5">Cytoskeleton</location>
        <location evidence="5">Microtubule organizing center</location>
        <location evidence="5">Centrosome</location>
        <location evidence="5">Centriole</location>
    </subcellularLocation>
    <text evidence="3 4 5 6">Localizes at the transition zone (TZ), a region between the basal body and the ciliary axoneme in the olfactory, auditory and speromatocyte system (PubMed:27646273, PubMed:30013109). In spermatocytes, localizes in the transition zone and the migrating base of the spermatid ciliary cap (PubMed:25447994, PubMed:27577095, PubMed:27646273). Co-localizes with the tectonic-like complex (PubMed:27646273).</text>
</comment>
<comment type="tissue specificity">
    <text evidence="3 4 5">Expressed in chordotonal neurons in the antennae (at protein level) (PubMed:27646273). Expressed in spermatids (at protein level) (PubMed:25447994, PubMed:27577095, PubMed:27646273).</text>
</comment>
<comment type="disruption phenotype">
    <text evidence="4">Viable and fertile. Minor defects in sensory cilia function probably due to lack of localization of the tectonic-like module proteins, namely tcnt, B9d1, B9d2 and TMEM216, to the transition zone. Does not affect the recruitment of Cep290 (PubMed:27577095). In sensory cells associated with the notum hair socket, results in structural defects including axonemes with abnormal microtubule connections to the basal body (BB); results in subtle defects in the localization of intraflagellar transport (IFT) proteins and an increase in the ratio of cilium volume to inner membrane volume (PubMed:27577095).</text>
</comment>
<feature type="chain" id="PRO_0000445802" description="Tectonic-like complex member Mks1" evidence="8">
    <location>
        <begin position="1"/>
        <end position="699"/>
    </location>
</feature>
<feature type="domain" description="C2 B9-type" evidence="1">
    <location>
        <begin position="434"/>
        <end position="560"/>
    </location>
</feature>
<feature type="region of interest" description="Disordered" evidence="2">
    <location>
        <begin position="101"/>
        <end position="121"/>
    </location>
</feature>
<feature type="region of interest" description="Disordered" evidence="2">
    <location>
        <begin position="373"/>
        <end position="396"/>
    </location>
</feature>
<feature type="region of interest" description="Disordered" evidence="2">
    <location>
        <begin position="632"/>
        <end position="661"/>
    </location>
</feature>
<feature type="compositionally biased region" description="Basic and acidic residues" evidence="2">
    <location>
        <begin position="108"/>
        <end position="119"/>
    </location>
</feature>
<feature type="sequence conflict" description="In Ref. 3; AAL68109." evidence="8" ref="3">
    <original>A</original>
    <variation>V</variation>
    <location>
        <position position="369"/>
    </location>
</feature>
<feature type="sequence conflict" description="In Ref. 3; AAL68109." evidence="8" ref="3">
    <original>A</original>
    <variation>T</variation>
    <location>
        <position position="538"/>
    </location>
</feature>
<keyword id="KW-0966">Cell projection</keyword>
<keyword id="KW-0970">Cilium biogenesis/degradation</keyword>
<keyword id="KW-0963">Cytoplasm</keyword>
<keyword id="KW-0206">Cytoskeleton</keyword>
<keyword id="KW-1185">Reference proteome</keyword>
<proteinExistence type="evidence at protein level"/>
<reference evidence="14" key="1">
    <citation type="journal article" date="2000" name="Science">
        <title>The genome sequence of Drosophila melanogaster.</title>
        <authorList>
            <person name="Adams M.D."/>
            <person name="Celniker S.E."/>
            <person name="Holt R.A."/>
            <person name="Evans C.A."/>
            <person name="Gocayne J.D."/>
            <person name="Amanatides P.G."/>
            <person name="Scherer S.E."/>
            <person name="Li P.W."/>
            <person name="Hoskins R.A."/>
            <person name="Galle R.F."/>
            <person name="George R.A."/>
            <person name="Lewis S.E."/>
            <person name="Richards S."/>
            <person name="Ashburner M."/>
            <person name="Henderson S.N."/>
            <person name="Sutton G.G."/>
            <person name="Wortman J.R."/>
            <person name="Yandell M.D."/>
            <person name="Zhang Q."/>
            <person name="Chen L.X."/>
            <person name="Brandon R.C."/>
            <person name="Rogers Y.-H.C."/>
            <person name="Blazej R.G."/>
            <person name="Champe M."/>
            <person name="Pfeiffer B.D."/>
            <person name="Wan K.H."/>
            <person name="Doyle C."/>
            <person name="Baxter E.G."/>
            <person name="Helt G."/>
            <person name="Nelson C.R."/>
            <person name="Miklos G.L.G."/>
            <person name="Abril J.F."/>
            <person name="Agbayani A."/>
            <person name="An H.-J."/>
            <person name="Andrews-Pfannkoch C."/>
            <person name="Baldwin D."/>
            <person name="Ballew R.M."/>
            <person name="Basu A."/>
            <person name="Baxendale J."/>
            <person name="Bayraktaroglu L."/>
            <person name="Beasley E.M."/>
            <person name="Beeson K.Y."/>
            <person name="Benos P.V."/>
            <person name="Berman B.P."/>
            <person name="Bhandari D."/>
            <person name="Bolshakov S."/>
            <person name="Borkova D."/>
            <person name="Botchan M.R."/>
            <person name="Bouck J."/>
            <person name="Brokstein P."/>
            <person name="Brottier P."/>
            <person name="Burtis K.C."/>
            <person name="Busam D.A."/>
            <person name="Butler H."/>
            <person name="Cadieu E."/>
            <person name="Center A."/>
            <person name="Chandra I."/>
            <person name="Cherry J.M."/>
            <person name="Cawley S."/>
            <person name="Dahlke C."/>
            <person name="Davenport L.B."/>
            <person name="Davies P."/>
            <person name="de Pablos B."/>
            <person name="Delcher A."/>
            <person name="Deng Z."/>
            <person name="Mays A.D."/>
            <person name="Dew I."/>
            <person name="Dietz S.M."/>
            <person name="Dodson K."/>
            <person name="Doup L.E."/>
            <person name="Downes M."/>
            <person name="Dugan-Rocha S."/>
            <person name="Dunkov B.C."/>
            <person name="Dunn P."/>
            <person name="Durbin K.J."/>
            <person name="Evangelista C.C."/>
            <person name="Ferraz C."/>
            <person name="Ferriera S."/>
            <person name="Fleischmann W."/>
            <person name="Fosler C."/>
            <person name="Gabrielian A.E."/>
            <person name="Garg N.S."/>
            <person name="Gelbart W.M."/>
            <person name="Glasser K."/>
            <person name="Glodek A."/>
            <person name="Gong F."/>
            <person name="Gorrell J.H."/>
            <person name="Gu Z."/>
            <person name="Guan P."/>
            <person name="Harris M."/>
            <person name="Harris N.L."/>
            <person name="Harvey D.A."/>
            <person name="Heiman T.J."/>
            <person name="Hernandez J.R."/>
            <person name="Houck J."/>
            <person name="Hostin D."/>
            <person name="Houston K.A."/>
            <person name="Howland T.J."/>
            <person name="Wei M.-H."/>
            <person name="Ibegwam C."/>
            <person name="Jalali M."/>
            <person name="Kalush F."/>
            <person name="Karpen G.H."/>
            <person name="Ke Z."/>
            <person name="Kennison J.A."/>
            <person name="Ketchum K.A."/>
            <person name="Kimmel B.E."/>
            <person name="Kodira C.D."/>
            <person name="Kraft C.L."/>
            <person name="Kravitz S."/>
            <person name="Kulp D."/>
            <person name="Lai Z."/>
            <person name="Lasko P."/>
            <person name="Lei Y."/>
            <person name="Levitsky A.A."/>
            <person name="Li J.H."/>
            <person name="Li Z."/>
            <person name="Liang Y."/>
            <person name="Lin X."/>
            <person name="Liu X."/>
            <person name="Mattei B."/>
            <person name="McIntosh T.C."/>
            <person name="McLeod M.P."/>
            <person name="McPherson D."/>
            <person name="Merkulov G."/>
            <person name="Milshina N.V."/>
            <person name="Mobarry C."/>
            <person name="Morris J."/>
            <person name="Moshrefi A."/>
            <person name="Mount S.M."/>
            <person name="Moy M."/>
            <person name="Murphy B."/>
            <person name="Murphy L."/>
            <person name="Muzny D.M."/>
            <person name="Nelson D.L."/>
            <person name="Nelson D.R."/>
            <person name="Nelson K.A."/>
            <person name="Nixon K."/>
            <person name="Nusskern D.R."/>
            <person name="Pacleb J.M."/>
            <person name="Palazzolo M."/>
            <person name="Pittman G.S."/>
            <person name="Pan S."/>
            <person name="Pollard J."/>
            <person name="Puri V."/>
            <person name="Reese M.G."/>
            <person name="Reinert K."/>
            <person name="Remington K."/>
            <person name="Saunders R.D.C."/>
            <person name="Scheeler F."/>
            <person name="Shen H."/>
            <person name="Shue B.C."/>
            <person name="Siden-Kiamos I."/>
            <person name="Simpson M."/>
            <person name="Skupski M.P."/>
            <person name="Smith T.J."/>
            <person name="Spier E."/>
            <person name="Spradling A.C."/>
            <person name="Stapleton M."/>
            <person name="Strong R."/>
            <person name="Sun E."/>
            <person name="Svirskas R."/>
            <person name="Tector C."/>
            <person name="Turner R."/>
            <person name="Venter E."/>
            <person name="Wang A.H."/>
            <person name="Wang X."/>
            <person name="Wang Z.-Y."/>
            <person name="Wassarman D.A."/>
            <person name="Weinstock G.M."/>
            <person name="Weissenbach J."/>
            <person name="Williams S.M."/>
            <person name="Woodage T."/>
            <person name="Worley K.C."/>
            <person name="Wu D."/>
            <person name="Yang S."/>
            <person name="Yao Q.A."/>
            <person name="Ye J."/>
            <person name="Yeh R.-F."/>
            <person name="Zaveri J.S."/>
            <person name="Zhan M."/>
            <person name="Zhang G."/>
            <person name="Zhao Q."/>
            <person name="Zheng L."/>
            <person name="Zheng X.H."/>
            <person name="Zhong F.N."/>
            <person name="Zhong W."/>
            <person name="Zhou X."/>
            <person name="Zhu S.C."/>
            <person name="Zhu X."/>
            <person name="Smith H.O."/>
            <person name="Gibbs R.A."/>
            <person name="Myers E.W."/>
            <person name="Rubin G.M."/>
            <person name="Venter J.C."/>
        </authorList>
    </citation>
    <scope>NUCLEOTIDE SEQUENCE [LARGE SCALE GENOMIC DNA]</scope>
    <source>
        <strain evidence="14">Berkeley</strain>
    </source>
</reference>
<reference evidence="14" key="2">
    <citation type="journal article" date="2002" name="Genome Biol.">
        <title>Annotation of the Drosophila melanogaster euchromatic genome: a systematic review.</title>
        <authorList>
            <person name="Misra S."/>
            <person name="Crosby M.A."/>
            <person name="Mungall C.J."/>
            <person name="Matthews B.B."/>
            <person name="Campbell K.S."/>
            <person name="Hradecky P."/>
            <person name="Huang Y."/>
            <person name="Kaminker J.S."/>
            <person name="Millburn G.H."/>
            <person name="Prochnik S.E."/>
            <person name="Smith C.D."/>
            <person name="Tupy J.L."/>
            <person name="Whitfield E.J."/>
            <person name="Bayraktaroglu L."/>
            <person name="Berman B.P."/>
            <person name="Bettencourt B.R."/>
            <person name="Celniker S.E."/>
            <person name="de Grey A.D.N.J."/>
            <person name="Drysdale R.A."/>
            <person name="Harris N.L."/>
            <person name="Richter J."/>
            <person name="Russo S."/>
            <person name="Schroeder A.J."/>
            <person name="Shu S.Q."/>
            <person name="Stapleton M."/>
            <person name="Yamada C."/>
            <person name="Ashburner M."/>
            <person name="Gelbart W.M."/>
            <person name="Rubin G.M."/>
            <person name="Lewis S.E."/>
        </authorList>
    </citation>
    <scope>GENOME REANNOTATION</scope>
    <source>
        <strain evidence="14">Berkeley</strain>
    </source>
</reference>
<reference evidence="11" key="3">
    <citation type="journal article" date="2002" name="Genome Biol.">
        <title>A Drosophila full-length cDNA resource.</title>
        <authorList>
            <person name="Stapleton M."/>
            <person name="Carlson J.W."/>
            <person name="Brokstein P."/>
            <person name="Yu C."/>
            <person name="Champe M."/>
            <person name="George R.A."/>
            <person name="Guarin H."/>
            <person name="Kronmiller B."/>
            <person name="Pacleb J.M."/>
            <person name="Park S."/>
            <person name="Wan K.H."/>
            <person name="Rubin G.M."/>
            <person name="Celniker S.E."/>
        </authorList>
    </citation>
    <scope>NUCLEOTIDE SEQUENCE [LARGE SCALE MRNA]</scope>
    <source>
        <strain evidence="11">Berkeley</strain>
        <tissue evidence="11">Testis</tissue>
    </source>
</reference>
<reference evidence="12" key="4">
    <citation type="submission" date="2013-09" db="EMBL/GenBank/DDBJ databases">
        <authorList>
            <person name="Carlson J."/>
            <person name="Booth B."/>
            <person name="Frise E."/>
            <person name="Park S."/>
            <person name="Wan K."/>
            <person name="Yu C."/>
            <person name="Celniker S."/>
        </authorList>
    </citation>
    <scope>NUCLEOTIDE SEQUENCE [LARGE SCALE MRNA]</scope>
    <source>
        <strain evidence="12">Berkeley</strain>
    </source>
</reference>
<reference evidence="8" key="5">
    <citation type="journal article" date="2014" name="Curr. Biol.">
        <title>A migrating ciliary gate compartmentalizes the site of axoneme assembly in Drosophila spermatids.</title>
        <authorList>
            <person name="Basiri M.L."/>
            <person name="Ha A."/>
            <person name="Chadha A."/>
            <person name="Clark N.M."/>
            <person name="Polyanovsky A."/>
            <person name="Cook B."/>
            <person name="Avidor-Reiss T."/>
        </authorList>
    </citation>
    <scope>SUBCELLULAR LOCATION</scope>
    <scope>TISSUE SPECIFICITY</scope>
</reference>
<reference evidence="8" key="6">
    <citation type="journal article" date="2016" name="J. Cell Biol.">
        <title>Transition zone assembly and its contribution to axoneme formation in Drosophila male germ cells.</title>
        <authorList>
            <person name="Vieillard J."/>
            <person name="Paschaki M."/>
            <person name="Duteyrat J.L."/>
            <person name="Augiere C."/>
            <person name="Cortier E."/>
            <person name="Lapart J.A."/>
            <person name="Thomas J."/>
            <person name="Durand B."/>
        </authorList>
    </citation>
    <scope>FUNCTION</scope>
    <scope>IDENTIFICATION IN THE MKS COMPLEX</scope>
    <scope>SUBCELLULAR LOCATION</scope>
    <scope>TISSUE SPECIFICITY</scope>
</reference>
<reference evidence="8" key="7">
    <citation type="journal article" date="2016" name="J. Cell Sci.">
        <title>Drosophila sensory cilia lacking MKS proteins exhibit striking defects in development but only subtle defects in adults.</title>
        <authorList>
            <person name="Pratt M.B."/>
            <person name="Titlow J.S."/>
            <person name="Davis I."/>
            <person name="Barker A.R."/>
            <person name="Dawe H.R."/>
            <person name="Raff J.W."/>
            <person name="Roque H."/>
        </authorList>
    </citation>
    <scope>FUNCTION</scope>
    <scope>IDENTIFICATION IN THE MKS COMPLEX</scope>
    <scope>SUBCELLULAR LOCATION</scope>
    <scope>TISSUE SPECIFICITY</scope>
    <scope>DISRUPTION PHENOTYPE</scope>
</reference>
<reference evidence="8" key="8">
    <citation type="journal article" date="2018" name="Nat. Cell Biol.">
        <title>Differential regulation of transition zone and centriole proteins contributes to ciliary base diversity.</title>
        <authorList>
            <person name="Jana S.C."/>
            <person name="Mendonca S."/>
            <person name="Machado P."/>
            <person name="Werner S."/>
            <person name="Rocha J."/>
            <person name="Pereira A."/>
            <person name="Maiato H."/>
            <person name="Bettencourt-Dias M."/>
        </authorList>
    </citation>
    <scope>SUBCELLULAR LOCATION</scope>
    <scope>TISSUE SPECIFICITY</scope>
</reference>
<evidence type="ECO:0000255" key="1">
    <source>
        <dbReference type="PROSITE-ProRule" id="PRU00713"/>
    </source>
</evidence>
<evidence type="ECO:0000256" key="2">
    <source>
        <dbReference type="SAM" id="MobiDB-lite"/>
    </source>
</evidence>
<evidence type="ECO:0000269" key="3">
    <source>
    </source>
</evidence>
<evidence type="ECO:0000269" key="4">
    <source>
    </source>
</evidence>
<evidence type="ECO:0000269" key="5">
    <source>
    </source>
</evidence>
<evidence type="ECO:0000269" key="6">
    <source>
    </source>
</evidence>
<evidence type="ECO:0000303" key="7">
    <source>
    </source>
</evidence>
<evidence type="ECO:0000305" key="8"/>
<evidence type="ECO:0000305" key="9">
    <source>
    </source>
</evidence>
<evidence type="ECO:0000305" key="10">
    <source>
    </source>
</evidence>
<evidence type="ECO:0000312" key="11">
    <source>
        <dbReference type="EMBL" id="AAL68109.1"/>
    </source>
</evidence>
<evidence type="ECO:0000312" key="12">
    <source>
        <dbReference type="EMBL" id="AGW24088.1"/>
    </source>
</evidence>
<evidence type="ECO:0000312" key="13">
    <source>
        <dbReference type="FlyBase" id="FBgn0030395"/>
    </source>
</evidence>
<evidence type="ECO:0000312" key="14">
    <source>
        <dbReference type="Proteomes" id="UP000000803"/>
    </source>
</evidence>
<gene>
    <name evidence="13" type="primary">Mks1</name>
    <name evidence="7" type="synonym">B9d3</name>
    <name evidence="13" type="ORF">CG15730</name>
</gene>
<accession>Q9VYM3</accession>
<accession>Q8T8W8</accession>
<sequence>MQKSRDIKRTGVYRVSGNIGDLQLELKLRHISEWLPVPKFEYAGAQSTNAYGDHYPGSEEDIWQDCYIHVPQGDDSCGGKTGLGYNCSYYNVGIGYTGRRRRSPISQHEGEMEKDKNEGEITDLESQSNRSWSILSDNSRPPAGDLFYKRNKELCNGAIATIRISWQQKHFSQAELEQYINNPGSCASKLQRRYHRWALETLKLQQRYLRKLENLEDAETVEDPEPITIRRRIRKPKAKQRGCSAAAHPTITSLSSANMSEVSILDDPNFAARTCLIHTLLDNDSESLMPAEASEFHKKGYQLMYIYADLQQDTLLVSIRYDPEQGLLYVYPDFSSSAQDLDYVIQIERNNDCRQLYAFGFENVTPLEAYDDDGFSEEADGEDEQELGDGLPIEEDLPEEASAEEILEFYRRRREAASERRSLLQFEMPPKRMKRVSLLLELQEGQNFENPNIHVRYYLKAPANTFYEGTPGVDTMQGATATCRNAGDWRSAHLGHCWQVTLLLEEQHHPADLLHLYFEVISIDSWQRERCEGYAHYAIPLTSALPTDSIRLQCIRPLGNWLDALNRYFIGGRQLFDFESFFDVHRQSEMHSRLNFNSDRPMTTTGTLSLRLQKLQQRQIDTSDQFHHHFHLELGNDSSDDGDSNDDDVRSSSNPDTSRATTLDEVMAAFVEARKRIELLLGNSSETASPSSAYYQAEF</sequence>
<organism evidence="14">
    <name type="scientific">Drosophila melanogaster</name>
    <name type="common">Fruit fly</name>
    <dbReference type="NCBI Taxonomy" id="7227"/>
    <lineage>
        <taxon>Eukaryota</taxon>
        <taxon>Metazoa</taxon>
        <taxon>Ecdysozoa</taxon>
        <taxon>Arthropoda</taxon>
        <taxon>Hexapoda</taxon>
        <taxon>Insecta</taxon>
        <taxon>Pterygota</taxon>
        <taxon>Neoptera</taxon>
        <taxon>Endopterygota</taxon>
        <taxon>Diptera</taxon>
        <taxon>Brachycera</taxon>
        <taxon>Muscomorpha</taxon>
        <taxon>Ephydroidea</taxon>
        <taxon>Drosophilidae</taxon>
        <taxon>Drosophila</taxon>
        <taxon>Sophophora</taxon>
    </lineage>
</organism>
<name>MKS1_DROME</name>